<proteinExistence type="evidence at protein level"/>
<organism>
    <name type="scientific">Rhodococcus opacus</name>
    <name type="common">Nocardia opaca</name>
    <dbReference type="NCBI Taxonomy" id="37919"/>
    <lineage>
        <taxon>Bacteria</taxon>
        <taxon>Bacillati</taxon>
        <taxon>Actinomycetota</taxon>
        <taxon>Actinomycetes</taxon>
        <taxon>Mycobacteriales</taxon>
        <taxon>Nocardiaceae</taxon>
        <taxon>Rhodococcus</taxon>
    </lineage>
</organism>
<keyword id="KW-0001">2Fe-2S</keyword>
<keyword id="KW-0003">3Fe-4S</keyword>
<keyword id="KW-0004">4Fe-4S</keyword>
<keyword id="KW-0963">Cytoplasm</keyword>
<keyword id="KW-0903">Direct protein sequencing</keyword>
<keyword id="KW-0408">Iron</keyword>
<keyword id="KW-0411">Iron-sulfur</keyword>
<keyword id="KW-0479">Metal-binding</keyword>
<keyword id="KW-0520">NAD</keyword>
<keyword id="KW-0560">Oxidoreductase</keyword>
<keyword id="KW-0614">Plasmid</keyword>
<name>HOXY_RHOOP</name>
<evidence type="ECO:0000256" key="1">
    <source>
        <dbReference type="SAM" id="MobiDB-lite"/>
    </source>
</evidence>
<evidence type="ECO:0000305" key="2"/>
<comment type="catalytic activity">
    <reaction>
        <text>H2 + NAD(+) = NADH + H(+)</text>
        <dbReference type="Rhea" id="RHEA:24636"/>
        <dbReference type="ChEBI" id="CHEBI:15378"/>
        <dbReference type="ChEBI" id="CHEBI:18276"/>
        <dbReference type="ChEBI" id="CHEBI:57540"/>
        <dbReference type="ChEBI" id="CHEBI:57945"/>
        <dbReference type="EC" id="1.12.1.2"/>
    </reaction>
</comment>
<comment type="cofactor">
    <cofactor>
        <name>[4Fe-4S] cluster</name>
        <dbReference type="ChEBI" id="CHEBI:49883"/>
    </cofactor>
    <text>Binds 2 [4Fe-4S] clusters.</text>
</comment>
<comment type="cofactor">
    <cofactor>
        <name>[3Fe-4S] cluster</name>
        <dbReference type="ChEBI" id="CHEBI:21137"/>
    </cofactor>
    <text>Binds 1 [3Fe-4S] cluster.</text>
</comment>
<comment type="cofactor">
    <cofactor>
        <name>[2Fe-2S] cluster</name>
        <dbReference type="ChEBI" id="CHEBI:190135"/>
    </cofactor>
    <text>Binds 1 [2Fe-2S] cluster.</text>
</comment>
<comment type="cofactor">
    <cofactor>
        <name>FMN</name>
        <dbReference type="ChEBI" id="CHEBI:58210"/>
    </cofactor>
</comment>
<comment type="cofactor">
    <cofactor>
        <name>Ni(2+)</name>
        <dbReference type="ChEBI" id="CHEBI:49786"/>
    </cofactor>
</comment>
<comment type="subunit">
    <text>Tetramer of an alpha and a gamma subunits (flavin-containing dimer), and a delta and a nickel-containing beta subunits (hydrogenase dimer).</text>
</comment>
<comment type="subcellular location">
    <subcellularLocation>
        <location>Cytoplasm</location>
    </subcellularLocation>
</comment>
<comment type="similarity">
    <text evidence="2">Belongs to the [NiFe]/[NiFeSe] hydrogenase small subunit family.</text>
</comment>
<geneLocation type="plasmid"/>
<sequence>MKHSEKNEIASHELPTTPLDPVLAAGRES</sequence>
<dbReference type="EC" id="1.12.1.2"/>
<dbReference type="GO" id="GO:0005737">
    <property type="term" value="C:cytoplasm"/>
    <property type="evidence" value="ECO:0007669"/>
    <property type="project" value="UniProtKB-SubCell"/>
</dbReference>
<dbReference type="GO" id="GO:0051537">
    <property type="term" value="F:2 iron, 2 sulfur cluster binding"/>
    <property type="evidence" value="ECO:0007669"/>
    <property type="project" value="UniProtKB-KW"/>
</dbReference>
<dbReference type="GO" id="GO:0051538">
    <property type="term" value="F:3 iron, 4 sulfur cluster binding"/>
    <property type="evidence" value="ECO:0007669"/>
    <property type="project" value="UniProtKB-KW"/>
</dbReference>
<dbReference type="GO" id="GO:0051539">
    <property type="term" value="F:4 iron, 4 sulfur cluster binding"/>
    <property type="evidence" value="ECO:0007669"/>
    <property type="project" value="UniProtKB-KW"/>
</dbReference>
<dbReference type="GO" id="GO:0047985">
    <property type="term" value="F:hydrogen dehydrogenase activity"/>
    <property type="evidence" value="ECO:0007669"/>
    <property type="project" value="UniProtKB-EC"/>
</dbReference>
<dbReference type="GO" id="GO:0046872">
    <property type="term" value="F:metal ion binding"/>
    <property type="evidence" value="ECO:0007669"/>
    <property type="project" value="UniProtKB-KW"/>
</dbReference>
<feature type="chain" id="PRO_0000199735" description="NAD-reducing hydrogenase HoxS subunit delta">
    <location>
        <begin position="1"/>
        <end position="29" status="greater than"/>
    </location>
</feature>
<feature type="region of interest" description="Disordered" evidence="1">
    <location>
        <begin position="1"/>
        <end position="29"/>
    </location>
</feature>
<feature type="compositionally biased region" description="Basic and acidic residues" evidence="1">
    <location>
        <begin position="1"/>
        <end position="11"/>
    </location>
</feature>
<feature type="non-terminal residue">
    <location>
        <position position="29"/>
    </location>
</feature>
<accession>P22660</accession>
<reference key="1">
    <citation type="journal article" date="1989" name="Eur. J. Biochem.">
        <title>Comparison of the NH2-terminal amino acid sequences of the four non-identical subunits of the NAD-linked hydrogenases from Nocardia opaca 1b and Alcaligenes eutrophus H16.</title>
        <authorList>
            <person name="Zaborosch C."/>
            <person name="Schneider K."/>
            <person name="Schlegel H.G."/>
            <person name="Kratzin H."/>
        </authorList>
    </citation>
    <scope>PROTEIN SEQUENCE</scope>
    <source>
        <strain>1B</strain>
    </source>
</reference>
<gene>
    <name type="primary">hoxY</name>
</gene>
<protein>
    <recommendedName>
        <fullName>NAD-reducing hydrogenase HoxS subunit delta</fullName>
        <ecNumber>1.12.1.2</ecNumber>
    </recommendedName>
</protein>